<accession>Q92G77</accession>
<sequence length="445" mass="50532">MSKKLYIKTYGCQMNVYDSVKMQDLLYPFGYEPTENIEEADVIILNTCHIREKAAEKTYSELGRIKKLQDTRTKQGLSSAIIVVAGCVAQAEGEEIFTRTPYVDIVVGPQSYYNLPELISKVVRHEKHLIDLDFVEEAKFDQLPEQLYPQGTSAFISVQEGCDKFCTFCVVPYTRGAEFSRNVEQVYREALKVVSSGAKEIMLLGQNVNAYHGKGPADKIFSLADLLKHLAQIPNLERLRYTTSHPIDMNNDLIKLYGTEPKLMPFLHLPVQSGSNKILKAMNRKHDREYYFDIINRLREARPDIVLSSDFIVGFPGETDEDFEDTLDLVRRVKYGQCYSFKYSPRPGTPGATRTDQIPEHIKSERLTILQQELMAQQLAFNTSCVGSTMKVLFDRNGKFDDQIIGKTPYMQSVYIQNPNKSLLGKISDVKITKASLNSLTGEIL</sequence>
<keyword id="KW-0004">4Fe-4S</keyword>
<keyword id="KW-0963">Cytoplasm</keyword>
<keyword id="KW-0408">Iron</keyword>
<keyword id="KW-0411">Iron-sulfur</keyword>
<keyword id="KW-0479">Metal-binding</keyword>
<keyword id="KW-0949">S-adenosyl-L-methionine</keyword>
<keyword id="KW-0808">Transferase</keyword>
<keyword id="KW-0819">tRNA processing</keyword>
<evidence type="ECO:0000255" key="1">
    <source>
        <dbReference type="HAMAP-Rule" id="MF_01864"/>
    </source>
</evidence>
<evidence type="ECO:0000255" key="2">
    <source>
        <dbReference type="PROSITE-ProRule" id="PRU01266"/>
    </source>
</evidence>
<dbReference type="EC" id="2.8.4.3" evidence="1"/>
<dbReference type="EMBL" id="AE006914">
    <property type="protein sequence ID" value="AAL03784.1"/>
    <property type="molecule type" value="Genomic_DNA"/>
</dbReference>
<dbReference type="PIR" id="F97855">
    <property type="entry name" value="F97855"/>
</dbReference>
<dbReference type="RefSeq" id="WP_010977810.1">
    <property type="nucleotide sequence ID" value="NC_003103.1"/>
</dbReference>
<dbReference type="SMR" id="Q92G77"/>
<dbReference type="GeneID" id="928396"/>
<dbReference type="KEGG" id="rco:RC1246"/>
<dbReference type="PATRIC" id="fig|272944.4.peg.1428"/>
<dbReference type="HOGENOM" id="CLU_018697_2_2_5"/>
<dbReference type="Proteomes" id="UP000000816">
    <property type="component" value="Chromosome"/>
</dbReference>
<dbReference type="GO" id="GO:0005829">
    <property type="term" value="C:cytosol"/>
    <property type="evidence" value="ECO:0007669"/>
    <property type="project" value="TreeGrafter"/>
</dbReference>
<dbReference type="GO" id="GO:0051539">
    <property type="term" value="F:4 iron, 4 sulfur cluster binding"/>
    <property type="evidence" value="ECO:0007669"/>
    <property type="project" value="UniProtKB-UniRule"/>
</dbReference>
<dbReference type="GO" id="GO:0046872">
    <property type="term" value="F:metal ion binding"/>
    <property type="evidence" value="ECO:0007669"/>
    <property type="project" value="UniProtKB-KW"/>
</dbReference>
<dbReference type="GO" id="GO:0035597">
    <property type="term" value="F:N6-isopentenyladenosine methylthiotransferase activity"/>
    <property type="evidence" value="ECO:0007669"/>
    <property type="project" value="TreeGrafter"/>
</dbReference>
<dbReference type="CDD" id="cd01335">
    <property type="entry name" value="Radical_SAM"/>
    <property type="match status" value="1"/>
</dbReference>
<dbReference type="FunFam" id="3.40.50.12160:FF:000001">
    <property type="entry name" value="tRNA-2-methylthio-N(6)-dimethylallyladenosine synthase"/>
    <property type="match status" value="1"/>
</dbReference>
<dbReference type="FunFam" id="3.80.30.20:FF:000001">
    <property type="entry name" value="tRNA-2-methylthio-N(6)-dimethylallyladenosine synthase 2"/>
    <property type="match status" value="1"/>
</dbReference>
<dbReference type="Gene3D" id="3.40.50.12160">
    <property type="entry name" value="Methylthiotransferase, N-terminal domain"/>
    <property type="match status" value="1"/>
</dbReference>
<dbReference type="Gene3D" id="3.80.30.20">
    <property type="entry name" value="tm_1862 like domain"/>
    <property type="match status" value="1"/>
</dbReference>
<dbReference type="HAMAP" id="MF_01864">
    <property type="entry name" value="tRNA_metthiotr_MiaB"/>
    <property type="match status" value="1"/>
</dbReference>
<dbReference type="InterPro" id="IPR006638">
    <property type="entry name" value="Elp3/MiaA/NifB-like_rSAM"/>
</dbReference>
<dbReference type="InterPro" id="IPR005839">
    <property type="entry name" value="Methylthiotransferase"/>
</dbReference>
<dbReference type="InterPro" id="IPR020612">
    <property type="entry name" value="Methylthiotransferase_CS"/>
</dbReference>
<dbReference type="InterPro" id="IPR013848">
    <property type="entry name" value="Methylthiotransferase_N"/>
</dbReference>
<dbReference type="InterPro" id="IPR038135">
    <property type="entry name" value="Methylthiotransferase_N_sf"/>
</dbReference>
<dbReference type="InterPro" id="IPR006463">
    <property type="entry name" value="MiaB_methiolase"/>
</dbReference>
<dbReference type="InterPro" id="IPR007197">
    <property type="entry name" value="rSAM"/>
</dbReference>
<dbReference type="InterPro" id="IPR023404">
    <property type="entry name" value="rSAM_horseshoe"/>
</dbReference>
<dbReference type="InterPro" id="IPR002792">
    <property type="entry name" value="TRAM_dom"/>
</dbReference>
<dbReference type="NCBIfam" id="TIGR01574">
    <property type="entry name" value="miaB-methiolase"/>
    <property type="match status" value="1"/>
</dbReference>
<dbReference type="NCBIfam" id="TIGR00089">
    <property type="entry name" value="MiaB/RimO family radical SAM methylthiotransferase"/>
    <property type="match status" value="1"/>
</dbReference>
<dbReference type="PANTHER" id="PTHR43020">
    <property type="entry name" value="CDK5 REGULATORY SUBUNIT-ASSOCIATED PROTEIN 1"/>
    <property type="match status" value="1"/>
</dbReference>
<dbReference type="PANTHER" id="PTHR43020:SF2">
    <property type="entry name" value="MITOCHONDRIAL TRNA METHYLTHIOTRANSFERASE CDK5RAP1"/>
    <property type="match status" value="1"/>
</dbReference>
<dbReference type="Pfam" id="PF04055">
    <property type="entry name" value="Radical_SAM"/>
    <property type="match status" value="1"/>
</dbReference>
<dbReference type="Pfam" id="PF01938">
    <property type="entry name" value="TRAM"/>
    <property type="match status" value="1"/>
</dbReference>
<dbReference type="Pfam" id="PF00919">
    <property type="entry name" value="UPF0004"/>
    <property type="match status" value="1"/>
</dbReference>
<dbReference type="SFLD" id="SFLDF00273">
    <property type="entry name" value="(dimethylallyl)adenosine_tRNA"/>
    <property type="match status" value="1"/>
</dbReference>
<dbReference type="SFLD" id="SFLDG01082">
    <property type="entry name" value="B12-binding_domain_containing"/>
    <property type="match status" value="1"/>
</dbReference>
<dbReference type="SFLD" id="SFLDS00029">
    <property type="entry name" value="Radical_SAM"/>
    <property type="match status" value="1"/>
</dbReference>
<dbReference type="SMART" id="SM00729">
    <property type="entry name" value="Elp3"/>
    <property type="match status" value="1"/>
</dbReference>
<dbReference type="SUPFAM" id="SSF102114">
    <property type="entry name" value="Radical SAM enzymes"/>
    <property type="match status" value="1"/>
</dbReference>
<dbReference type="PROSITE" id="PS51449">
    <property type="entry name" value="MTTASE_N"/>
    <property type="match status" value="1"/>
</dbReference>
<dbReference type="PROSITE" id="PS01278">
    <property type="entry name" value="MTTASE_RADICAL"/>
    <property type="match status" value="1"/>
</dbReference>
<dbReference type="PROSITE" id="PS51918">
    <property type="entry name" value="RADICAL_SAM"/>
    <property type="match status" value="1"/>
</dbReference>
<dbReference type="PROSITE" id="PS50926">
    <property type="entry name" value="TRAM"/>
    <property type="match status" value="1"/>
</dbReference>
<comment type="function">
    <text evidence="1">Catalyzes the methylthiolation of N6-(dimethylallyl)adenosine (i(6)A), leading to the formation of 2-methylthio-N6-(dimethylallyl)adenosine (ms(2)i(6)A) at position 37 in tRNAs that read codons beginning with uridine.</text>
</comment>
<comment type="catalytic activity">
    <reaction evidence="1">
        <text>N(6)-dimethylallyladenosine(37) in tRNA + (sulfur carrier)-SH + AH2 + 2 S-adenosyl-L-methionine = 2-methylsulfanyl-N(6)-dimethylallyladenosine(37) in tRNA + (sulfur carrier)-H + 5'-deoxyadenosine + L-methionine + A + S-adenosyl-L-homocysteine + 2 H(+)</text>
        <dbReference type="Rhea" id="RHEA:37067"/>
        <dbReference type="Rhea" id="RHEA-COMP:10375"/>
        <dbReference type="Rhea" id="RHEA-COMP:10376"/>
        <dbReference type="Rhea" id="RHEA-COMP:14737"/>
        <dbReference type="Rhea" id="RHEA-COMP:14739"/>
        <dbReference type="ChEBI" id="CHEBI:13193"/>
        <dbReference type="ChEBI" id="CHEBI:15378"/>
        <dbReference type="ChEBI" id="CHEBI:17319"/>
        <dbReference type="ChEBI" id="CHEBI:17499"/>
        <dbReference type="ChEBI" id="CHEBI:29917"/>
        <dbReference type="ChEBI" id="CHEBI:57844"/>
        <dbReference type="ChEBI" id="CHEBI:57856"/>
        <dbReference type="ChEBI" id="CHEBI:59789"/>
        <dbReference type="ChEBI" id="CHEBI:64428"/>
        <dbReference type="ChEBI" id="CHEBI:74415"/>
        <dbReference type="ChEBI" id="CHEBI:74417"/>
        <dbReference type="EC" id="2.8.4.3"/>
    </reaction>
</comment>
<comment type="cofactor">
    <cofactor evidence="1">
        <name>[4Fe-4S] cluster</name>
        <dbReference type="ChEBI" id="CHEBI:49883"/>
    </cofactor>
    <text evidence="1">Binds 2 [4Fe-4S] clusters. One cluster is coordinated with 3 cysteines and an exchangeable S-adenosyl-L-methionine.</text>
</comment>
<comment type="subunit">
    <text evidence="1">Monomer.</text>
</comment>
<comment type="subcellular location">
    <subcellularLocation>
        <location evidence="1">Cytoplasm</location>
    </subcellularLocation>
</comment>
<comment type="similarity">
    <text evidence="1">Belongs to the methylthiotransferase family. MiaB subfamily.</text>
</comment>
<name>MIAB_RICCN</name>
<gene>
    <name evidence="1" type="primary">miaB</name>
    <name type="ordered locus">RC1246</name>
</gene>
<proteinExistence type="inferred from homology"/>
<reference key="1">
    <citation type="journal article" date="2001" name="Science">
        <title>Mechanisms of evolution in Rickettsia conorii and R. prowazekii.</title>
        <authorList>
            <person name="Ogata H."/>
            <person name="Audic S."/>
            <person name="Renesto-Audiffren P."/>
            <person name="Fournier P.-E."/>
            <person name="Barbe V."/>
            <person name="Samson D."/>
            <person name="Roux V."/>
            <person name="Cossart P."/>
            <person name="Weissenbach J."/>
            <person name="Claverie J.-M."/>
            <person name="Raoult D."/>
        </authorList>
    </citation>
    <scope>NUCLEOTIDE SEQUENCE [LARGE SCALE GENOMIC DNA]</scope>
    <source>
        <strain>ATCC VR-613 / Malish 7</strain>
    </source>
</reference>
<protein>
    <recommendedName>
        <fullName evidence="1">tRNA-2-methylthio-N(6)-dimethylallyladenosine synthase</fullName>
        <ecNumber evidence="1">2.8.4.3</ecNumber>
    </recommendedName>
    <alternativeName>
        <fullName evidence="1">(Dimethylallyl)adenosine tRNA methylthiotransferase MiaB</fullName>
    </alternativeName>
    <alternativeName>
        <fullName evidence="1">tRNA-i(6)A37 methylthiotransferase</fullName>
    </alternativeName>
</protein>
<feature type="chain" id="PRO_0000374505" description="tRNA-2-methylthio-N(6)-dimethylallyladenosine synthase">
    <location>
        <begin position="1"/>
        <end position="445"/>
    </location>
</feature>
<feature type="domain" description="MTTase N-terminal" evidence="1">
    <location>
        <begin position="3"/>
        <end position="124"/>
    </location>
</feature>
<feature type="domain" description="Radical SAM core" evidence="2">
    <location>
        <begin position="148"/>
        <end position="380"/>
    </location>
</feature>
<feature type="domain" description="TRAM" evidence="1">
    <location>
        <begin position="383"/>
        <end position="445"/>
    </location>
</feature>
<feature type="binding site" evidence="1">
    <location>
        <position position="12"/>
    </location>
    <ligand>
        <name>[4Fe-4S] cluster</name>
        <dbReference type="ChEBI" id="CHEBI:49883"/>
        <label>1</label>
    </ligand>
</feature>
<feature type="binding site" evidence="1">
    <location>
        <position position="48"/>
    </location>
    <ligand>
        <name>[4Fe-4S] cluster</name>
        <dbReference type="ChEBI" id="CHEBI:49883"/>
        <label>1</label>
    </ligand>
</feature>
<feature type="binding site" evidence="1">
    <location>
        <position position="87"/>
    </location>
    <ligand>
        <name>[4Fe-4S] cluster</name>
        <dbReference type="ChEBI" id="CHEBI:49883"/>
        <label>1</label>
    </ligand>
</feature>
<feature type="binding site" evidence="1">
    <location>
        <position position="162"/>
    </location>
    <ligand>
        <name>[4Fe-4S] cluster</name>
        <dbReference type="ChEBI" id="CHEBI:49883"/>
        <label>2</label>
        <note>4Fe-4S-S-AdoMet</note>
    </ligand>
</feature>
<feature type="binding site" evidence="1">
    <location>
        <position position="166"/>
    </location>
    <ligand>
        <name>[4Fe-4S] cluster</name>
        <dbReference type="ChEBI" id="CHEBI:49883"/>
        <label>2</label>
        <note>4Fe-4S-S-AdoMet</note>
    </ligand>
</feature>
<feature type="binding site" evidence="1">
    <location>
        <position position="169"/>
    </location>
    <ligand>
        <name>[4Fe-4S] cluster</name>
        <dbReference type="ChEBI" id="CHEBI:49883"/>
        <label>2</label>
        <note>4Fe-4S-S-AdoMet</note>
    </ligand>
</feature>
<organism>
    <name type="scientific">Rickettsia conorii (strain ATCC VR-613 / Malish 7)</name>
    <dbReference type="NCBI Taxonomy" id="272944"/>
    <lineage>
        <taxon>Bacteria</taxon>
        <taxon>Pseudomonadati</taxon>
        <taxon>Pseudomonadota</taxon>
        <taxon>Alphaproteobacteria</taxon>
        <taxon>Rickettsiales</taxon>
        <taxon>Rickettsiaceae</taxon>
        <taxon>Rickettsieae</taxon>
        <taxon>Rickettsia</taxon>
        <taxon>spotted fever group</taxon>
    </lineage>
</organism>